<feature type="chain" id="PRO_1000118324" description="Heat-inducible transcription repressor HrcA">
    <location>
        <begin position="1"/>
        <end position="348"/>
    </location>
</feature>
<proteinExistence type="inferred from homology"/>
<reference key="1">
    <citation type="journal article" date="2009" name="PLoS ONE">
        <title>Complete genome sequence of the aerobic CO-oxidizing thermophile Thermomicrobium roseum.</title>
        <authorList>
            <person name="Wu D."/>
            <person name="Raymond J."/>
            <person name="Wu M."/>
            <person name="Chatterji S."/>
            <person name="Ren Q."/>
            <person name="Graham J.E."/>
            <person name="Bryant D.A."/>
            <person name="Robb F."/>
            <person name="Colman A."/>
            <person name="Tallon L.J."/>
            <person name="Badger J.H."/>
            <person name="Madupu R."/>
            <person name="Ward N.L."/>
            <person name="Eisen J.A."/>
        </authorList>
    </citation>
    <scope>NUCLEOTIDE SEQUENCE [LARGE SCALE GENOMIC DNA]</scope>
    <source>
        <strain>ATCC 27502 / DSM 5159 / P-2</strain>
    </source>
</reference>
<gene>
    <name evidence="1" type="primary">hrcA</name>
    <name type="ordered locus">trd_1638</name>
</gene>
<comment type="function">
    <text evidence="1">Negative regulator of class I heat shock genes (grpE-dnaK-dnaJ and groELS operons). Prevents heat-shock induction of these operons.</text>
</comment>
<comment type="similarity">
    <text evidence="1">Belongs to the HrcA family.</text>
</comment>
<name>HRCA_THERP</name>
<keyword id="KW-1185">Reference proteome</keyword>
<keyword id="KW-0678">Repressor</keyword>
<keyword id="KW-0346">Stress response</keyword>
<keyword id="KW-0804">Transcription</keyword>
<keyword id="KW-0805">Transcription regulation</keyword>
<dbReference type="EMBL" id="CP001275">
    <property type="protein sequence ID" value="ACM04796.1"/>
    <property type="molecule type" value="Genomic_DNA"/>
</dbReference>
<dbReference type="RefSeq" id="WP_015922583.1">
    <property type="nucleotide sequence ID" value="NC_011959.1"/>
</dbReference>
<dbReference type="SMR" id="B9L0E5"/>
<dbReference type="STRING" id="309801.trd_1638"/>
<dbReference type="KEGG" id="tro:trd_1638"/>
<dbReference type="eggNOG" id="COG1420">
    <property type="taxonomic scope" value="Bacteria"/>
</dbReference>
<dbReference type="HOGENOM" id="CLU_050019_1_0_0"/>
<dbReference type="OrthoDB" id="9783139at2"/>
<dbReference type="Proteomes" id="UP000000447">
    <property type="component" value="Chromosome"/>
</dbReference>
<dbReference type="GO" id="GO:0003677">
    <property type="term" value="F:DNA binding"/>
    <property type="evidence" value="ECO:0007669"/>
    <property type="project" value="InterPro"/>
</dbReference>
<dbReference type="GO" id="GO:0045892">
    <property type="term" value="P:negative regulation of DNA-templated transcription"/>
    <property type="evidence" value="ECO:0007669"/>
    <property type="project" value="UniProtKB-UniRule"/>
</dbReference>
<dbReference type="Gene3D" id="3.30.450.40">
    <property type="match status" value="1"/>
</dbReference>
<dbReference type="Gene3D" id="3.30.390.60">
    <property type="entry name" value="Heat-inducible transcription repressor hrca homolog, domain 3"/>
    <property type="match status" value="1"/>
</dbReference>
<dbReference type="Gene3D" id="1.10.10.10">
    <property type="entry name" value="Winged helix-like DNA-binding domain superfamily/Winged helix DNA-binding domain"/>
    <property type="match status" value="1"/>
</dbReference>
<dbReference type="HAMAP" id="MF_00081">
    <property type="entry name" value="HrcA"/>
    <property type="match status" value="1"/>
</dbReference>
<dbReference type="InterPro" id="IPR029016">
    <property type="entry name" value="GAF-like_dom_sf"/>
</dbReference>
<dbReference type="InterPro" id="IPR002571">
    <property type="entry name" value="HrcA"/>
</dbReference>
<dbReference type="InterPro" id="IPR021153">
    <property type="entry name" value="HrcA_C"/>
</dbReference>
<dbReference type="InterPro" id="IPR036388">
    <property type="entry name" value="WH-like_DNA-bd_sf"/>
</dbReference>
<dbReference type="InterPro" id="IPR036390">
    <property type="entry name" value="WH_DNA-bd_sf"/>
</dbReference>
<dbReference type="InterPro" id="IPR005104">
    <property type="entry name" value="WHTH_HrcA_DNA-bd"/>
</dbReference>
<dbReference type="InterPro" id="IPR023120">
    <property type="entry name" value="WHTH_transcript_rep_HrcA_IDD"/>
</dbReference>
<dbReference type="NCBIfam" id="TIGR00331">
    <property type="entry name" value="hrcA"/>
    <property type="match status" value="1"/>
</dbReference>
<dbReference type="PANTHER" id="PTHR34824">
    <property type="entry name" value="HEAT-INDUCIBLE TRANSCRIPTION REPRESSOR HRCA"/>
    <property type="match status" value="1"/>
</dbReference>
<dbReference type="PANTHER" id="PTHR34824:SF1">
    <property type="entry name" value="HEAT-INDUCIBLE TRANSCRIPTION REPRESSOR HRCA"/>
    <property type="match status" value="1"/>
</dbReference>
<dbReference type="Pfam" id="PF01628">
    <property type="entry name" value="HrcA"/>
    <property type="match status" value="1"/>
</dbReference>
<dbReference type="Pfam" id="PF03444">
    <property type="entry name" value="HrcA_DNA-bdg"/>
    <property type="match status" value="1"/>
</dbReference>
<dbReference type="PIRSF" id="PIRSF005485">
    <property type="entry name" value="HrcA"/>
    <property type="match status" value="1"/>
</dbReference>
<dbReference type="SUPFAM" id="SSF55781">
    <property type="entry name" value="GAF domain-like"/>
    <property type="match status" value="1"/>
</dbReference>
<dbReference type="SUPFAM" id="SSF46785">
    <property type="entry name" value="Winged helix' DNA-binding domain"/>
    <property type="match status" value="1"/>
</dbReference>
<sequence>MSVQLTERQRQILRHVVEEYLRSGRAVGSKALVERASLSVSPATVRNDMSVLEALDFLAHPHTSAGRVPTEHGLRYYVQHLMEESQLSSEEQLMIRHQFRQVEQQVPSWLKLAASVLAETSGNVGLVTPPRARVERLRHFELISLRRRVVLLVLVTQSGTIHQSLLELPQPLEQEELSALSQRLNPELRWLDRAAIERRAQGAEPTVALVLQRLAEALHFIEHQQRSELYAEGLEHVIRQPEFAQANLAHLLLEVLRGGMLLTWLLPRLDPSEEVRVLIGSDLALRELRPFSLILTAYRSGAESTGWLGVLGPQRMAYARAVAAVRFLASVVSELMSELSGGPDREGG</sequence>
<evidence type="ECO:0000255" key="1">
    <source>
        <dbReference type="HAMAP-Rule" id="MF_00081"/>
    </source>
</evidence>
<accession>B9L0E5</accession>
<protein>
    <recommendedName>
        <fullName evidence="1">Heat-inducible transcription repressor HrcA</fullName>
    </recommendedName>
</protein>
<organism>
    <name type="scientific">Thermomicrobium roseum (strain ATCC 27502 / DSM 5159 / P-2)</name>
    <dbReference type="NCBI Taxonomy" id="309801"/>
    <lineage>
        <taxon>Bacteria</taxon>
        <taxon>Pseudomonadati</taxon>
        <taxon>Thermomicrobiota</taxon>
        <taxon>Thermomicrobia</taxon>
        <taxon>Thermomicrobiales</taxon>
        <taxon>Thermomicrobiaceae</taxon>
        <taxon>Thermomicrobium</taxon>
    </lineage>
</organism>